<comment type="function">
    <text evidence="1">DNA-dependent RNA polymerase catalyzes the transcription of DNA into RNA using the four ribonucleoside triphosphates as substrates.</text>
</comment>
<comment type="catalytic activity">
    <reaction evidence="1">
        <text>RNA(n) + a ribonucleoside 5'-triphosphate = RNA(n+1) + diphosphate</text>
        <dbReference type="Rhea" id="RHEA:21248"/>
        <dbReference type="Rhea" id="RHEA-COMP:14527"/>
        <dbReference type="Rhea" id="RHEA-COMP:17342"/>
        <dbReference type="ChEBI" id="CHEBI:33019"/>
        <dbReference type="ChEBI" id="CHEBI:61557"/>
        <dbReference type="ChEBI" id="CHEBI:140395"/>
        <dbReference type="EC" id="2.7.7.6"/>
    </reaction>
</comment>
<comment type="subunit">
    <text evidence="1">The RNAP catalytic core consists of 2 alpha, 1 beta, 1 beta' and 1 omega subunit. When a sigma factor is associated with the core the holoenzyme is formed, which can initiate transcription.</text>
</comment>
<comment type="similarity">
    <text evidence="1">Belongs to the RNA polymerase beta chain family.</text>
</comment>
<protein>
    <recommendedName>
        <fullName evidence="1">DNA-directed RNA polymerase subunit beta</fullName>
        <shortName evidence="1">RNAP subunit beta</shortName>
        <ecNumber evidence="1">2.7.7.6</ecNumber>
    </recommendedName>
    <alternativeName>
        <fullName evidence="1">RNA polymerase subunit beta</fullName>
    </alternativeName>
    <alternativeName>
        <fullName evidence="1">Transcriptase subunit beta</fullName>
    </alternativeName>
</protein>
<sequence length="1357" mass="150993">MAYSYTEKKRIRKDFSKLPDVMDVPYLLAIQLDSYREFLQAGASKDHFRDVGLHAAFKSVFPIISYSGNAALEYVGYRLGEPAFDVKECVLRGVTFAVPLRVKVRLIIFDKESSNKAIKDIKEQEVYMGEIPLMTENGTFVINGTERVIVSQLHRSPGVFFDHDRGKTHSSGKLLYSARIIPYRGSWLDFEFDPKDCVFVRIDRRRKLPASVLLRALGYSTEEVLNTFYTTNVFHISGEKLSLELVPQRLRGEVAVMDIHDETGKVIVEQGRRITARHINQLEKAGVKQLDVPMEYVLGRTTAKAIVHPATGEILAECNTEMTTELLIKVAKAQVVRIETLYTNDIDCGPFISDTLKIDTTSNQLEALVEIYRMMRPGEPPTKDAAETLFNNLFFSAERYDLSAVGRMKFNRRIGRTEIEGSGVLSKEDIVEVLKTLVDIRNGKGIVDDIDHLGNRRVRCVGEMAENQFRVGLVRVERAVKERLSMAESEGLMPQDLINAKPVAAAVKEFFGSSQLSQFMDQNNPLSEITHKRRVSALGPGGLTRERAGFEVRDVHPTHYGRVCPIETPEGPNIGLINSLAAYARTNQYGFLESPYRVVKEGVVSDDIVFLSAIEEADHVIAQASAAMNDKKQLIDELVAVRHLNEFTVKAPEDVTLMDVSPKQVVSVAASLIPFLEHDDANRALMGSNMQRQAVPTLRADKPLVGTGMERNVARDSGVCVVARRGGVIDSVDASRIVVRVADDEVETGEAGVDIYNLTKYTRSNQNTCINQRPLVSKGDKVQRGDIMADGPSTDMGELALGQNMRIAFMAWNGFNFEDSICLSERVVQEDRFTTIHIQELTCVARDTKLGPEEITADIPNVGEAALNKLDEAGIVYVGAEVGAGDILVGKVTPKGETQLTPEEKLLRAIFGEKASDVKDTSLRVPTGTKGTVIDVQVFTRDGVERDSRALAIEKMQLDEIRKDLNEEFRIVEGATFERLRSALNGQVVDGGAGLKKGTVITDEVLDGLEHGQWFKLRMAEDALNEQLEKAQQYIVDRRRLLDDKFEDKKRKLQQGDDLAPGVLKIVKVYLAIRRRIQPGDKMAGRHGNKGVVSVIMPVEDMPHDANGTPVDVVLNPLGVPSRMNVGQILETHLGLAAKGLGEKIDRMLEEQRKAAELRVFLTEVYNEIGGRQENLDEFTDEEILALANNLKKGVPMATPVFDGAKEREIKAMLKLADLPESGQMVLFDGRTGNKFERPVTVGYMYMLKLNHLVDDKMHARSTGSYSLVTQQPLGGKAQFGGQRFGEMEVWALEAYGAAYTLQEMLTVKSDDVNGRTKMYKNIVDGDHRMEPGMPESFNVLIKEIRSLGIDIDLETE</sequence>
<evidence type="ECO:0000255" key="1">
    <source>
        <dbReference type="HAMAP-Rule" id="MF_01321"/>
    </source>
</evidence>
<keyword id="KW-0240">DNA-directed RNA polymerase</keyword>
<keyword id="KW-0548">Nucleotidyltransferase</keyword>
<keyword id="KW-0804">Transcription</keyword>
<keyword id="KW-0808">Transferase</keyword>
<name>RPOB_PSEP1</name>
<organism>
    <name type="scientific">Pseudomonas putida (strain ATCC 700007 / DSM 6899 / JCM 31910 / BCRC 17059 / LMG 24140 / F1)</name>
    <dbReference type="NCBI Taxonomy" id="351746"/>
    <lineage>
        <taxon>Bacteria</taxon>
        <taxon>Pseudomonadati</taxon>
        <taxon>Pseudomonadota</taxon>
        <taxon>Gammaproteobacteria</taxon>
        <taxon>Pseudomonadales</taxon>
        <taxon>Pseudomonadaceae</taxon>
        <taxon>Pseudomonas</taxon>
    </lineage>
</organism>
<reference key="1">
    <citation type="submission" date="2007-05" db="EMBL/GenBank/DDBJ databases">
        <title>Complete sequence of Pseudomonas putida F1.</title>
        <authorList>
            <consortium name="US DOE Joint Genome Institute"/>
            <person name="Copeland A."/>
            <person name="Lucas S."/>
            <person name="Lapidus A."/>
            <person name="Barry K."/>
            <person name="Detter J.C."/>
            <person name="Glavina del Rio T."/>
            <person name="Hammon N."/>
            <person name="Israni S."/>
            <person name="Dalin E."/>
            <person name="Tice H."/>
            <person name="Pitluck S."/>
            <person name="Chain P."/>
            <person name="Malfatti S."/>
            <person name="Shin M."/>
            <person name="Vergez L."/>
            <person name="Schmutz J."/>
            <person name="Larimer F."/>
            <person name="Land M."/>
            <person name="Hauser L."/>
            <person name="Kyrpides N."/>
            <person name="Lykidis A."/>
            <person name="Parales R."/>
            <person name="Richardson P."/>
        </authorList>
    </citation>
    <scope>NUCLEOTIDE SEQUENCE [LARGE SCALE GENOMIC DNA]</scope>
    <source>
        <strain>ATCC 700007 / DSM 6899 / JCM 31910 / BCRC 17059 / LMG 24140 / F1</strain>
    </source>
</reference>
<gene>
    <name evidence="1" type="primary">rpoB</name>
    <name type="ordered locus">Pput_0480</name>
</gene>
<dbReference type="EC" id="2.7.7.6" evidence="1"/>
<dbReference type="EMBL" id="CP000712">
    <property type="protein sequence ID" value="ABQ76650.1"/>
    <property type="molecule type" value="Genomic_DNA"/>
</dbReference>
<dbReference type="SMR" id="A5VXP0"/>
<dbReference type="KEGG" id="ppf:Pput_0480"/>
<dbReference type="eggNOG" id="COG0085">
    <property type="taxonomic scope" value="Bacteria"/>
</dbReference>
<dbReference type="HOGENOM" id="CLU_000524_4_0_6"/>
<dbReference type="GO" id="GO:0000428">
    <property type="term" value="C:DNA-directed RNA polymerase complex"/>
    <property type="evidence" value="ECO:0007669"/>
    <property type="project" value="UniProtKB-KW"/>
</dbReference>
<dbReference type="GO" id="GO:0003677">
    <property type="term" value="F:DNA binding"/>
    <property type="evidence" value="ECO:0007669"/>
    <property type="project" value="UniProtKB-UniRule"/>
</dbReference>
<dbReference type="GO" id="GO:0003899">
    <property type="term" value="F:DNA-directed RNA polymerase activity"/>
    <property type="evidence" value="ECO:0007669"/>
    <property type="project" value="UniProtKB-UniRule"/>
</dbReference>
<dbReference type="GO" id="GO:0032549">
    <property type="term" value="F:ribonucleoside binding"/>
    <property type="evidence" value="ECO:0007669"/>
    <property type="project" value="InterPro"/>
</dbReference>
<dbReference type="GO" id="GO:0006351">
    <property type="term" value="P:DNA-templated transcription"/>
    <property type="evidence" value="ECO:0007669"/>
    <property type="project" value="UniProtKB-UniRule"/>
</dbReference>
<dbReference type="CDD" id="cd00653">
    <property type="entry name" value="RNA_pol_B_RPB2"/>
    <property type="match status" value="1"/>
</dbReference>
<dbReference type="FunFam" id="2.40.50.100:FF:000006">
    <property type="entry name" value="DNA-directed RNA polymerase subunit beta"/>
    <property type="match status" value="1"/>
</dbReference>
<dbReference type="FunFam" id="2.40.50.150:FF:000001">
    <property type="entry name" value="DNA-directed RNA polymerase subunit beta"/>
    <property type="match status" value="1"/>
</dbReference>
<dbReference type="FunFam" id="3.90.1110.10:FF:000001">
    <property type="entry name" value="DNA-directed RNA polymerase subunit beta"/>
    <property type="match status" value="1"/>
</dbReference>
<dbReference type="FunFam" id="3.90.1110.10:FF:000004">
    <property type="entry name" value="DNA-directed RNA polymerase subunit beta"/>
    <property type="match status" value="1"/>
</dbReference>
<dbReference type="FunFam" id="3.90.1800.10:FF:000001">
    <property type="entry name" value="DNA-directed RNA polymerase subunit beta"/>
    <property type="match status" value="1"/>
</dbReference>
<dbReference type="Gene3D" id="2.40.50.100">
    <property type="match status" value="1"/>
</dbReference>
<dbReference type="Gene3D" id="2.40.50.150">
    <property type="match status" value="1"/>
</dbReference>
<dbReference type="Gene3D" id="3.90.1100.10">
    <property type="match status" value="2"/>
</dbReference>
<dbReference type="Gene3D" id="2.30.150.10">
    <property type="entry name" value="DNA-directed RNA polymerase, beta subunit, external 1 domain"/>
    <property type="match status" value="1"/>
</dbReference>
<dbReference type="Gene3D" id="2.40.270.10">
    <property type="entry name" value="DNA-directed RNA polymerase, subunit 2, domain 6"/>
    <property type="match status" value="1"/>
</dbReference>
<dbReference type="Gene3D" id="3.90.1800.10">
    <property type="entry name" value="RNA polymerase alpha subunit dimerisation domain"/>
    <property type="match status" value="1"/>
</dbReference>
<dbReference type="Gene3D" id="3.90.1110.10">
    <property type="entry name" value="RNA polymerase Rpb2, domain 2"/>
    <property type="match status" value="1"/>
</dbReference>
<dbReference type="HAMAP" id="MF_01321">
    <property type="entry name" value="RNApol_bact_RpoB"/>
    <property type="match status" value="1"/>
</dbReference>
<dbReference type="InterPro" id="IPR042107">
    <property type="entry name" value="DNA-dir_RNA_pol_bsu_ext_1_sf"/>
</dbReference>
<dbReference type="InterPro" id="IPR019462">
    <property type="entry name" value="DNA-dir_RNA_pol_bsu_external_1"/>
</dbReference>
<dbReference type="InterPro" id="IPR015712">
    <property type="entry name" value="DNA-dir_RNA_pol_su2"/>
</dbReference>
<dbReference type="InterPro" id="IPR007120">
    <property type="entry name" value="DNA-dir_RNAP_su2_dom"/>
</dbReference>
<dbReference type="InterPro" id="IPR037033">
    <property type="entry name" value="DNA-dir_RNAP_su2_hyb_sf"/>
</dbReference>
<dbReference type="InterPro" id="IPR010243">
    <property type="entry name" value="RNA_pol_bsu_bac"/>
</dbReference>
<dbReference type="InterPro" id="IPR007121">
    <property type="entry name" value="RNA_pol_bsu_CS"/>
</dbReference>
<dbReference type="InterPro" id="IPR007644">
    <property type="entry name" value="RNA_pol_bsu_protrusion"/>
</dbReference>
<dbReference type="InterPro" id="IPR007642">
    <property type="entry name" value="RNA_pol_Rpb2_2"/>
</dbReference>
<dbReference type="InterPro" id="IPR037034">
    <property type="entry name" value="RNA_pol_Rpb2_2_sf"/>
</dbReference>
<dbReference type="InterPro" id="IPR007645">
    <property type="entry name" value="RNA_pol_Rpb2_3"/>
</dbReference>
<dbReference type="InterPro" id="IPR007641">
    <property type="entry name" value="RNA_pol_Rpb2_7"/>
</dbReference>
<dbReference type="InterPro" id="IPR014724">
    <property type="entry name" value="RNA_pol_RPB2_OB-fold"/>
</dbReference>
<dbReference type="NCBIfam" id="NF001616">
    <property type="entry name" value="PRK00405.1"/>
    <property type="match status" value="1"/>
</dbReference>
<dbReference type="NCBIfam" id="TIGR02013">
    <property type="entry name" value="rpoB"/>
    <property type="match status" value="1"/>
</dbReference>
<dbReference type="PANTHER" id="PTHR20856">
    <property type="entry name" value="DNA-DIRECTED RNA POLYMERASE I SUBUNIT 2"/>
    <property type="match status" value="1"/>
</dbReference>
<dbReference type="Pfam" id="PF04563">
    <property type="entry name" value="RNA_pol_Rpb2_1"/>
    <property type="match status" value="1"/>
</dbReference>
<dbReference type="Pfam" id="PF04561">
    <property type="entry name" value="RNA_pol_Rpb2_2"/>
    <property type="match status" value="2"/>
</dbReference>
<dbReference type="Pfam" id="PF04565">
    <property type="entry name" value="RNA_pol_Rpb2_3"/>
    <property type="match status" value="1"/>
</dbReference>
<dbReference type="Pfam" id="PF10385">
    <property type="entry name" value="RNA_pol_Rpb2_45"/>
    <property type="match status" value="1"/>
</dbReference>
<dbReference type="Pfam" id="PF00562">
    <property type="entry name" value="RNA_pol_Rpb2_6"/>
    <property type="match status" value="1"/>
</dbReference>
<dbReference type="Pfam" id="PF04560">
    <property type="entry name" value="RNA_pol_Rpb2_7"/>
    <property type="match status" value="1"/>
</dbReference>
<dbReference type="SUPFAM" id="SSF64484">
    <property type="entry name" value="beta and beta-prime subunits of DNA dependent RNA-polymerase"/>
    <property type="match status" value="1"/>
</dbReference>
<dbReference type="PROSITE" id="PS01166">
    <property type="entry name" value="RNA_POL_BETA"/>
    <property type="match status" value="1"/>
</dbReference>
<proteinExistence type="inferred from homology"/>
<feature type="chain" id="PRO_1000051975" description="DNA-directed RNA polymerase subunit beta">
    <location>
        <begin position="1"/>
        <end position="1357"/>
    </location>
</feature>
<accession>A5VXP0</accession>